<organism>
    <name type="scientific">Deinococcus deserti (strain DSM 17065 / CIP 109153 / LMG 22923 / VCD115)</name>
    <dbReference type="NCBI Taxonomy" id="546414"/>
    <lineage>
        <taxon>Bacteria</taxon>
        <taxon>Thermotogati</taxon>
        <taxon>Deinococcota</taxon>
        <taxon>Deinococci</taxon>
        <taxon>Deinococcales</taxon>
        <taxon>Deinococcaceae</taxon>
        <taxon>Deinococcus</taxon>
    </lineage>
</organism>
<gene>
    <name type="primary">ddrA</name>
    <name type="ordered locus">Deide_09150</name>
</gene>
<keyword id="KW-0227">DNA damage</keyword>
<keyword id="KW-0234">DNA repair</keyword>
<keyword id="KW-0238">DNA-binding</keyword>
<keyword id="KW-1185">Reference proteome</keyword>
<keyword id="KW-0346">Stress response</keyword>
<feature type="chain" id="PRO_0000394496" description="Single-stranded DNA-binding protein DdrA">
    <location>
        <begin position="1"/>
        <end position="201"/>
    </location>
</feature>
<accession>C1D1R8</accession>
<name>DDRA_DEIDV</name>
<comment type="function">
    <text evidence="2 3">ssDNA-binding protein that contributes to the ionizing radiation resistance of D.deserti. Plays a role in DNA repair and genome reconstitution, in a RecA-independent process, since DdrA is essential for recovery from severe genomic fragmentation as a result of exposure to severe levels of ionizing radiation in an environment lacking nutrients (Probable). In vitro, binds to the 3'-ends of single-stranded DNA, and probably protects them from nuclease degradation. Thus, DdrA is part of a DNA end-protection system that helps to preserve genome integrity following irradiation or desiccation.</text>
</comment>
<comment type="subunit">
    <text evidence="2">The truncated form (1-160) of DdrA forms heptameric rings that can assemble into a 3-ring structure.</text>
</comment>
<comment type="induction">
    <text evidence="1">Induced to high levels following extreme ionizing radiation exposure. Also highly induced in response to desiccation stress (By similarity).</text>
</comment>
<comment type="domain">
    <text evidence="2">The N-terminal domain (1-160) is sufficient to pilot the oligomerization process and to bind specifically single-stranded DNA, but is not functional in vivo.</text>
</comment>
<comment type="similarity">
    <text evidence="3">Belongs to the RAD52 family.</text>
</comment>
<protein>
    <recommendedName>
        <fullName>Single-stranded DNA-binding protein DdrA</fullName>
    </recommendedName>
    <alternativeName>
        <fullName>DNA damage response protein A</fullName>
    </alternativeName>
</protein>
<sequence>MKLSDVQKRLQAPFPAHAVAWKPGVITKDRSRALMLAHIDARNVQDRLDAVCPDAWSFEVEVVPGTRLPTVKGRLTVLGVSREDIGEAPEGDLGTLKAAASDALKRCAVQFGIGRYLYDLPKQWVAWNDAKREPVSPPELPEWARPDHERSPGGAHLVQAMDQLRYEMPEDLELQREVYKHLKAALGSLHPISGGNQGRAA</sequence>
<evidence type="ECO:0000250" key="1"/>
<evidence type="ECO:0000269" key="2">
    <source>
    </source>
</evidence>
<evidence type="ECO:0000305" key="3"/>
<dbReference type="EMBL" id="CP001114">
    <property type="protein sequence ID" value="ACO45792.1"/>
    <property type="molecule type" value="Genomic_DNA"/>
</dbReference>
<dbReference type="RefSeq" id="WP_012692915.1">
    <property type="nucleotide sequence ID" value="NC_012526.1"/>
</dbReference>
<dbReference type="STRING" id="546414.Deide_09150"/>
<dbReference type="PaxDb" id="546414-Deide_09150"/>
<dbReference type="KEGG" id="ddr:Deide_09150"/>
<dbReference type="eggNOG" id="COG4712">
    <property type="taxonomic scope" value="Bacteria"/>
</dbReference>
<dbReference type="HOGENOM" id="CLU_113751_0_0_0"/>
<dbReference type="OrthoDB" id="9805874at2"/>
<dbReference type="Proteomes" id="UP000002208">
    <property type="component" value="Chromosome"/>
</dbReference>
<dbReference type="GO" id="GO:0003677">
    <property type="term" value="F:DNA binding"/>
    <property type="evidence" value="ECO:0007669"/>
    <property type="project" value="UniProtKB-KW"/>
</dbReference>
<dbReference type="GO" id="GO:0006281">
    <property type="term" value="P:DNA repair"/>
    <property type="evidence" value="ECO:0007669"/>
    <property type="project" value="UniProtKB-KW"/>
</dbReference>
<dbReference type="InterPro" id="IPR041247">
    <property type="entry name" value="Rad52_fam"/>
</dbReference>
<dbReference type="Pfam" id="PF04098">
    <property type="entry name" value="Rad52_Rad22"/>
    <property type="match status" value="1"/>
</dbReference>
<proteinExistence type="evidence at protein level"/>
<reference key="1">
    <citation type="journal article" date="2009" name="PLoS Genet.">
        <title>Alliance of proteomics and genomics to unravel the specificities of Sahara bacterium Deinococcus deserti.</title>
        <authorList>
            <person name="de Groot A."/>
            <person name="Dulermo R."/>
            <person name="Ortet P."/>
            <person name="Blanchard L."/>
            <person name="Guerin P."/>
            <person name="Fernandez B."/>
            <person name="Vacherie B."/>
            <person name="Dossat C."/>
            <person name="Jolivet E."/>
            <person name="Siguier P."/>
            <person name="Chandler M."/>
            <person name="Barakat M."/>
            <person name="Dedieu A."/>
            <person name="Barbe V."/>
            <person name="Heulin T."/>
            <person name="Sommer S."/>
            <person name="Achouak W."/>
            <person name="Armengaud J."/>
        </authorList>
    </citation>
    <scope>NUCLEOTIDE SEQUENCE [LARGE SCALE GENOMIC DNA]</scope>
    <source>
        <strain>DSM 17065 / CIP 109153 / LMG 22923 / VCD115</strain>
    </source>
</reference>
<reference key="2">
    <citation type="journal article" date="2008" name="Biochim. Biophys. Acta">
        <title>Complex oligomeric structure of a truncated form of DdrA: a protein required for the extreme radiotolerance of Deinococcus.</title>
        <authorList>
            <person name="Gutsche I."/>
            <person name="Vujicic-Zagar A."/>
            <person name="Siebert X."/>
            <person name="Servant P."/>
            <person name="Vannier F."/>
            <person name="Castaing B."/>
            <person name="Gallet B."/>
            <person name="Heulin T."/>
            <person name="de Groot A."/>
            <person name="Sommer S."/>
            <person name="Serre L."/>
        </authorList>
    </citation>
    <scope>FUNCTION AS A DNA-BINDING PROTEIN</scope>
    <scope>ROLE IN RADIORESISTANCE</scope>
    <scope>DOMAIN</scope>
    <scope>SUBUNIT</scope>
</reference>